<accession>A5IY48</accession>
<evidence type="ECO:0000255" key="1">
    <source>
        <dbReference type="HAMAP-Rule" id="MF_00291"/>
    </source>
</evidence>
<evidence type="ECO:0000256" key="2">
    <source>
        <dbReference type="SAM" id="MobiDB-lite"/>
    </source>
</evidence>
<evidence type="ECO:0000305" key="3"/>
<keyword id="KW-1185">Reference proteome</keyword>
<keyword id="KW-0687">Ribonucleoprotein</keyword>
<keyword id="KW-0689">Ribosomal protein</keyword>
<comment type="similarity">
    <text evidence="1">Belongs to the universal ribosomal protein uS2 family.</text>
</comment>
<gene>
    <name evidence="1" type="primary">rpsB</name>
    <name type="ordered locus">MAG2590</name>
</gene>
<reference key="1">
    <citation type="journal article" date="2007" name="PLoS Genet.">
        <title>Being pathogenic, plastic, and sexual while living with a nearly minimal bacterial genome.</title>
        <authorList>
            <person name="Sirand-Pugnet P."/>
            <person name="Lartigue C."/>
            <person name="Marenda M."/>
            <person name="Jacob D."/>
            <person name="Barre A."/>
            <person name="Barbe V."/>
            <person name="Schenowitz C."/>
            <person name="Mangenot S."/>
            <person name="Couloux A."/>
            <person name="Segurens B."/>
            <person name="de Daruvar A."/>
            <person name="Blanchard A."/>
            <person name="Citti C."/>
        </authorList>
    </citation>
    <scope>NUCLEOTIDE SEQUENCE [LARGE SCALE GENOMIC DNA]</scope>
    <source>
        <strain>NCTC 10123 / CIP 59.7 / PG2</strain>
    </source>
</reference>
<name>RS2_MYCAP</name>
<organism>
    <name type="scientific">Mycoplasmopsis agalactiae (strain NCTC 10123 / CIP 59.7 / PG2)</name>
    <name type="common">Mycoplasma agalactiae</name>
    <dbReference type="NCBI Taxonomy" id="347257"/>
    <lineage>
        <taxon>Bacteria</taxon>
        <taxon>Bacillati</taxon>
        <taxon>Mycoplasmatota</taxon>
        <taxon>Mycoplasmoidales</taxon>
        <taxon>Metamycoplasmataceae</taxon>
        <taxon>Mycoplasmopsis</taxon>
    </lineage>
</organism>
<proteinExistence type="inferred from homology"/>
<protein>
    <recommendedName>
        <fullName evidence="1">Small ribosomal subunit protein uS2</fullName>
    </recommendedName>
    <alternativeName>
        <fullName evidence="3">30S ribosomal protein S2</fullName>
    </alternativeName>
</protein>
<feature type="chain" id="PRO_0000352010" description="Small ribosomal subunit protein uS2">
    <location>
        <begin position="1"/>
        <end position="317"/>
    </location>
</feature>
<feature type="region of interest" description="Disordered" evidence="2">
    <location>
        <begin position="1"/>
        <end position="30"/>
    </location>
</feature>
<feature type="region of interest" description="Disordered" evidence="2">
    <location>
        <begin position="293"/>
        <end position="317"/>
    </location>
</feature>
<feature type="compositionally biased region" description="Basic and acidic residues" evidence="2">
    <location>
        <begin position="18"/>
        <end position="30"/>
    </location>
</feature>
<feature type="compositionally biased region" description="Low complexity" evidence="2">
    <location>
        <begin position="308"/>
        <end position="317"/>
    </location>
</feature>
<sequence length="317" mass="35473">MENENLKVEQATTAENNMAEKADDSKASKEVKPTIVSREKLLEAGTYFGHKKSMWNPKMKEFLYPQSKRGMHMINTNVTLQRLEFAYNILNKFVAKNPRTTFIFVGTKKQAKDTIKDNALRTGSFYVSERWLGGTLTNASTIFKRVKVMEELEAQAAKKFQGYTKKEGLIKQKELDKLHKNLDGIRKMQSLPSFMIVADPNVDAIAVKEARSKGVKVIGILDSNSNPDAVDFGIPANDDSAKSITLIMTILADAIATARGGKAKFAYQGDDKVILPEFKTDKTLNPRFMNQRRSFEQNSAEGVKTVEKTTTSTEVAE</sequence>
<dbReference type="EMBL" id="CU179680">
    <property type="protein sequence ID" value="CAL58957.1"/>
    <property type="molecule type" value="Genomic_DNA"/>
</dbReference>
<dbReference type="RefSeq" id="WP_004024415.1">
    <property type="nucleotide sequence ID" value="NC_009497.1"/>
</dbReference>
<dbReference type="SMR" id="A5IY48"/>
<dbReference type="STRING" id="347257.MAG2590"/>
<dbReference type="GeneID" id="93358022"/>
<dbReference type="KEGG" id="maa:MAG2590"/>
<dbReference type="HOGENOM" id="CLU_040318_0_0_14"/>
<dbReference type="Proteomes" id="UP000007065">
    <property type="component" value="Chromosome"/>
</dbReference>
<dbReference type="GO" id="GO:0022627">
    <property type="term" value="C:cytosolic small ribosomal subunit"/>
    <property type="evidence" value="ECO:0007669"/>
    <property type="project" value="TreeGrafter"/>
</dbReference>
<dbReference type="GO" id="GO:0003735">
    <property type="term" value="F:structural constituent of ribosome"/>
    <property type="evidence" value="ECO:0007669"/>
    <property type="project" value="InterPro"/>
</dbReference>
<dbReference type="GO" id="GO:0006412">
    <property type="term" value="P:translation"/>
    <property type="evidence" value="ECO:0007669"/>
    <property type="project" value="UniProtKB-UniRule"/>
</dbReference>
<dbReference type="CDD" id="cd01425">
    <property type="entry name" value="RPS2"/>
    <property type="match status" value="1"/>
</dbReference>
<dbReference type="Gene3D" id="3.40.50.10490">
    <property type="entry name" value="Glucose-6-phosphate isomerase like protein, domain 1"/>
    <property type="match status" value="1"/>
</dbReference>
<dbReference type="Gene3D" id="1.10.287.610">
    <property type="entry name" value="Helix hairpin bin"/>
    <property type="match status" value="1"/>
</dbReference>
<dbReference type="HAMAP" id="MF_00291_B">
    <property type="entry name" value="Ribosomal_uS2_B"/>
    <property type="match status" value="1"/>
</dbReference>
<dbReference type="InterPro" id="IPR001865">
    <property type="entry name" value="Ribosomal_uS2"/>
</dbReference>
<dbReference type="InterPro" id="IPR005706">
    <property type="entry name" value="Ribosomal_uS2_bac/mit/plastid"/>
</dbReference>
<dbReference type="InterPro" id="IPR023591">
    <property type="entry name" value="Ribosomal_uS2_flav_dom_sf"/>
</dbReference>
<dbReference type="NCBIfam" id="TIGR01011">
    <property type="entry name" value="rpsB_bact"/>
    <property type="match status" value="1"/>
</dbReference>
<dbReference type="PANTHER" id="PTHR12534">
    <property type="entry name" value="30S RIBOSOMAL PROTEIN S2 PROKARYOTIC AND ORGANELLAR"/>
    <property type="match status" value="1"/>
</dbReference>
<dbReference type="PANTHER" id="PTHR12534:SF0">
    <property type="entry name" value="SMALL RIBOSOMAL SUBUNIT PROTEIN US2M"/>
    <property type="match status" value="1"/>
</dbReference>
<dbReference type="Pfam" id="PF00318">
    <property type="entry name" value="Ribosomal_S2"/>
    <property type="match status" value="1"/>
</dbReference>
<dbReference type="PRINTS" id="PR00395">
    <property type="entry name" value="RIBOSOMALS2"/>
</dbReference>
<dbReference type="SUPFAM" id="SSF52313">
    <property type="entry name" value="Ribosomal protein S2"/>
    <property type="match status" value="1"/>
</dbReference>